<protein>
    <recommendedName>
        <fullName evidence="1">Pyridoxal 5'-phosphate synthase subunit PdxS</fullName>
        <shortName evidence="1">PLP synthase subunit PdxS</shortName>
        <ecNumber evidence="1">4.3.3.6</ecNumber>
    </recommendedName>
    <alternativeName>
        <fullName evidence="1">Pdx1</fullName>
    </alternativeName>
</protein>
<organism>
    <name type="scientific">Thermoanaerobacter pseudethanolicus (strain ATCC 33223 / 39E)</name>
    <name type="common">Clostridium thermohydrosulfuricum</name>
    <dbReference type="NCBI Taxonomy" id="340099"/>
    <lineage>
        <taxon>Bacteria</taxon>
        <taxon>Bacillati</taxon>
        <taxon>Bacillota</taxon>
        <taxon>Clostridia</taxon>
        <taxon>Thermoanaerobacterales</taxon>
        <taxon>Thermoanaerobacteraceae</taxon>
        <taxon>Thermoanaerobacter</taxon>
    </lineage>
</organism>
<sequence>MNERYELNKNLAQMLKGGVIMDVTTPEQAVIAEKAGAVAVMALERVPADIRARGGVARMSDPKIIKEIKAAVSIPVMAKVRIGHFVEAQILEALGIDFIDESEVLTPADEMYHIDKWAFKIPFVCGARNLGEALRRIGEGASMIRTKGEAGTGNVVEAVRHMRIINAEIKRLTTLREDELMAAAKELQAPYELVKYVAQHGRLPVVNFAAGGIATPADAALMMQLGADGVFVGSGIFKSQNPEKMAEAIVKAVTYYDKPEILAEVSEGLGEAMQSIDIRKLDEKDLYASRGW</sequence>
<accession>B0KAS1</accession>
<comment type="function">
    <text evidence="1">Catalyzes the formation of pyridoxal 5'-phosphate from ribose 5-phosphate (RBP), glyceraldehyde 3-phosphate (G3P) and ammonia. The ammonia is provided by the PdxT subunit. Can also use ribulose 5-phosphate and dihydroxyacetone phosphate as substrates, resulting from enzyme-catalyzed isomerization of RBP and G3P, respectively.</text>
</comment>
<comment type="catalytic activity">
    <reaction evidence="1">
        <text>aldehydo-D-ribose 5-phosphate + D-glyceraldehyde 3-phosphate + L-glutamine = pyridoxal 5'-phosphate + L-glutamate + phosphate + 3 H2O + H(+)</text>
        <dbReference type="Rhea" id="RHEA:31507"/>
        <dbReference type="ChEBI" id="CHEBI:15377"/>
        <dbReference type="ChEBI" id="CHEBI:15378"/>
        <dbReference type="ChEBI" id="CHEBI:29985"/>
        <dbReference type="ChEBI" id="CHEBI:43474"/>
        <dbReference type="ChEBI" id="CHEBI:58273"/>
        <dbReference type="ChEBI" id="CHEBI:58359"/>
        <dbReference type="ChEBI" id="CHEBI:59776"/>
        <dbReference type="ChEBI" id="CHEBI:597326"/>
        <dbReference type="EC" id="4.3.3.6"/>
    </reaction>
</comment>
<comment type="pathway">
    <text evidence="1">Cofactor biosynthesis; pyridoxal 5'-phosphate biosynthesis.</text>
</comment>
<comment type="subunit">
    <text evidence="1">In the presence of PdxT, forms a dodecamer of heterodimers.</text>
</comment>
<comment type="similarity">
    <text evidence="1">Belongs to the PdxS/SNZ family.</text>
</comment>
<evidence type="ECO:0000255" key="1">
    <source>
        <dbReference type="HAMAP-Rule" id="MF_01824"/>
    </source>
</evidence>
<name>PDXS_THEP3</name>
<proteinExistence type="inferred from homology"/>
<keyword id="KW-0456">Lyase</keyword>
<keyword id="KW-0663">Pyridoxal phosphate</keyword>
<keyword id="KW-1185">Reference proteome</keyword>
<keyword id="KW-0704">Schiff base</keyword>
<gene>
    <name evidence="1" type="primary">pdxS</name>
    <name type="ordered locus">Teth39_1560</name>
</gene>
<reference key="1">
    <citation type="submission" date="2008-01" db="EMBL/GenBank/DDBJ databases">
        <title>Complete sequence of Thermoanaerobacter pseudethanolicus 39E.</title>
        <authorList>
            <person name="Copeland A."/>
            <person name="Lucas S."/>
            <person name="Lapidus A."/>
            <person name="Barry K."/>
            <person name="Glavina del Rio T."/>
            <person name="Dalin E."/>
            <person name="Tice H."/>
            <person name="Pitluck S."/>
            <person name="Bruce D."/>
            <person name="Goodwin L."/>
            <person name="Saunders E."/>
            <person name="Brettin T."/>
            <person name="Detter J.C."/>
            <person name="Han C."/>
            <person name="Schmutz J."/>
            <person name="Larimer F."/>
            <person name="Land M."/>
            <person name="Hauser L."/>
            <person name="Kyrpides N."/>
            <person name="Lykidis A."/>
            <person name="Hemme C."/>
            <person name="Fields M.W."/>
            <person name="He Z."/>
            <person name="Zhou J."/>
            <person name="Richardson P."/>
        </authorList>
    </citation>
    <scope>NUCLEOTIDE SEQUENCE [LARGE SCALE GENOMIC DNA]</scope>
    <source>
        <strain>ATCC 33223 / DSM 2355 / 39E</strain>
    </source>
</reference>
<dbReference type="EC" id="4.3.3.6" evidence="1"/>
<dbReference type="EMBL" id="CP000924">
    <property type="protein sequence ID" value="ABY95205.1"/>
    <property type="molecule type" value="Genomic_DNA"/>
</dbReference>
<dbReference type="RefSeq" id="WP_003867751.1">
    <property type="nucleotide sequence ID" value="NC_010321.1"/>
</dbReference>
<dbReference type="SMR" id="B0KAS1"/>
<dbReference type="STRING" id="340099.Teth39_1560"/>
<dbReference type="KEGG" id="tpd:Teth39_1560"/>
<dbReference type="eggNOG" id="COG0214">
    <property type="taxonomic scope" value="Bacteria"/>
</dbReference>
<dbReference type="HOGENOM" id="CLU_055352_1_0_9"/>
<dbReference type="UniPathway" id="UPA00245"/>
<dbReference type="Proteomes" id="UP000002156">
    <property type="component" value="Chromosome"/>
</dbReference>
<dbReference type="GO" id="GO:0036381">
    <property type="term" value="F:pyridoxal 5'-phosphate synthase (glutamine hydrolysing) activity"/>
    <property type="evidence" value="ECO:0007669"/>
    <property type="project" value="UniProtKB-UniRule"/>
</dbReference>
<dbReference type="GO" id="GO:0006520">
    <property type="term" value="P:amino acid metabolic process"/>
    <property type="evidence" value="ECO:0007669"/>
    <property type="project" value="TreeGrafter"/>
</dbReference>
<dbReference type="GO" id="GO:0042823">
    <property type="term" value="P:pyridoxal phosphate biosynthetic process"/>
    <property type="evidence" value="ECO:0007669"/>
    <property type="project" value="UniProtKB-UniRule"/>
</dbReference>
<dbReference type="GO" id="GO:0008615">
    <property type="term" value="P:pyridoxine biosynthetic process"/>
    <property type="evidence" value="ECO:0007669"/>
    <property type="project" value="TreeGrafter"/>
</dbReference>
<dbReference type="CDD" id="cd04727">
    <property type="entry name" value="pdxS"/>
    <property type="match status" value="1"/>
</dbReference>
<dbReference type="FunFam" id="3.20.20.70:FF:000001">
    <property type="entry name" value="Pyridoxine biosynthesis protein PDX1"/>
    <property type="match status" value="1"/>
</dbReference>
<dbReference type="Gene3D" id="3.20.20.70">
    <property type="entry name" value="Aldolase class I"/>
    <property type="match status" value="1"/>
</dbReference>
<dbReference type="HAMAP" id="MF_01824">
    <property type="entry name" value="PdxS"/>
    <property type="match status" value="1"/>
</dbReference>
<dbReference type="InterPro" id="IPR013785">
    <property type="entry name" value="Aldolase_TIM"/>
</dbReference>
<dbReference type="InterPro" id="IPR001852">
    <property type="entry name" value="PdxS/SNZ"/>
</dbReference>
<dbReference type="InterPro" id="IPR033755">
    <property type="entry name" value="PdxS/SNZ_N"/>
</dbReference>
<dbReference type="InterPro" id="IPR011060">
    <property type="entry name" value="RibuloseP-bd_barrel"/>
</dbReference>
<dbReference type="NCBIfam" id="NF003215">
    <property type="entry name" value="PRK04180.1"/>
    <property type="match status" value="1"/>
</dbReference>
<dbReference type="NCBIfam" id="TIGR00343">
    <property type="entry name" value="pyridoxal 5'-phosphate synthase lyase subunit PdxS"/>
    <property type="match status" value="1"/>
</dbReference>
<dbReference type="PANTHER" id="PTHR31829">
    <property type="entry name" value="PYRIDOXAL 5'-PHOSPHATE SYNTHASE SUBUNIT SNZ1-RELATED"/>
    <property type="match status" value="1"/>
</dbReference>
<dbReference type="PANTHER" id="PTHR31829:SF0">
    <property type="entry name" value="PYRIDOXAL 5'-PHOSPHATE SYNTHASE SUBUNIT SNZ1-RELATED"/>
    <property type="match status" value="1"/>
</dbReference>
<dbReference type="Pfam" id="PF01680">
    <property type="entry name" value="SOR_SNZ"/>
    <property type="match status" value="1"/>
</dbReference>
<dbReference type="PIRSF" id="PIRSF029271">
    <property type="entry name" value="Pdx1"/>
    <property type="match status" value="1"/>
</dbReference>
<dbReference type="SUPFAM" id="SSF51366">
    <property type="entry name" value="Ribulose-phoshate binding barrel"/>
    <property type="match status" value="1"/>
</dbReference>
<dbReference type="PROSITE" id="PS01235">
    <property type="entry name" value="PDXS_SNZ_1"/>
    <property type="match status" value="1"/>
</dbReference>
<dbReference type="PROSITE" id="PS51129">
    <property type="entry name" value="PDXS_SNZ_2"/>
    <property type="match status" value="1"/>
</dbReference>
<feature type="chain" id="PRO_1000188248" description="Pyridoxal 5'-phosphate synthase subunit PdxS">
    <location>
        <begin position="1"/>
        <end position="292"/>
    </location>
</feature>
<feature type="active site" description="Schiff-base intermediate with D-ribose 5-phosphate" evidence="1">
    <location>
        <position position="79"/>
    </location>
</feature>
<feature type="binding site" evidence="1">
    <location>
        <position position="22"/>
    </location>
    <ligand>
        <name>D-ribose 5-phosphate</name>
        <dbReference type="ChEBI" id="CHEBI:78346"/>
    </ligand>
</feature>
<feature type="binding site" evidence="1">
    <location>
        <position position="151"/>
    </location>
    <ligand>
        <name>D-ribose 5-phosphate</name>
        <dbReference type="ChEBI" id="CHEBI:78346"/>
    </ligand>
</feature>
<feature type="binding site" evidence="1">
    <location>
        <position position="163"/>
    </location>
    <ligand>
        <name>D-glyceraldehyde 3-phosphate</name>
        <dbReference type="ChEBI" id="CHEBI:59776"/>
    </ligand>
</feature>
<feature type="binding site" evidence="1">
    <location>
        <position position="212"/>
    </location>
    <ligand>
        <name>D-ribose 5-phosphate</name>
        <dbReference type="ChEBI" id="CHEBI:78346"/>
    </ligand>
</feature>
<feature type="binding site" evidence="1">
    <location>
        <begin position="233"/>
        <end position="234"/>
    </location>
    <ligand>
        <name>D-ribose 5-phosphate</name>
        <dbReference type="ChEBI" id="CHEBI:78346"/>
    </ligand>
</feature>